<name>BPT_RHOPA</name>
<organism>
    <name type="scientific">Rhodopseudomonas palustris (strain ATCC BAA-98 / CGA009)</name>
    <dbReference type="NCBI Taxonomy" id="258594"/>
    <lineage>
        <taxon>Bacteria</taxon>
        <taxon>Pseudomonadati</taxon>
        <taxon>Pseudomonadota</taxon>
        <taxon>Alphaproteobacteria</taxon>
        <taxon>Hyphomicrobiales</taxon>
        <taxon>Nitrobacteraceae</taxon>
        <taxon>Rhodopseudomonas</taxon>
    </lineage>
</organism>
<sequence>MTQHSRDTPQFYLTAPSPCPYLPGRHERKVFTHLVGNKAGELNDLLTHGGFRRSQSIAYRPACDQCRACVSVRVIANEFKPSRNQRKLLARNADIVGEQRNPVPTSEQYSVFRAYLDQRHRYGGMADMTVLDYAMMVEDSHVQTRMIEYRKRTPDTGITGRGGELIAAALTDVLGDGLSMVYSFYEPNEQHRSLGTFMILDHIARARRLGLPYVYLGYWIEGSKKMDYKGRYLPQQRLAPSGWLRIDASGEMQPEPQD</sequence>
<gene>
    <name evidence="1" type="primary">bpt</name>
    <name type="ordered locus">RPA2710</name>
</gene>
<evidence type="ECO:0000255" key="1">
    <source>
        <dbReference type="HAMAP-Rule" id="MF_00689"/>
    </source>
</evidence>
<comment type="function">
    <text evidence="1">Functions in the N-end rule pathway of protein degradation where it conjugates Leu from its aminoacyl-tRNA to the N-termini of proteins containing an N-terminal aspartate or glutamate.</text>
</comment>
<comment type="catalytic activity">
    <reaction evidence="1">
        <text>N-terminal L-glutamyl-[protein] + L-leucyl-tRNA(Leu) = N-terminal L-leucyl-L-glutamyl-[protein] + tRNA(Leu) + H(+)</text>
        <dbReference type="Rhea" id="RHEA:50412"/>
        <dbReference type="Rhea" id="RHEA-COMP:9613"/>
        <dbReference type="Rhea" id="RHEA-COMP:9622"/>
        <dbReference type="Rhea" id="RHEA-COMP:12664"/>
        <dbReference type="Rhea" id="RHEA-COMP:12668"/>
        <dbReference type="ChEBI" id="CHEBI:15378"/>
        <dbReference type="ChEBI" id="CHEBI:64721"/>
        <dbReference type="ChEBI" id="CHEBI:78442"/>
        <dbReference type="ChEBI" id="CHEBI:78494"/>
        <dbReference type="ChEBI" id="CHEBI:133041"/>
        <dbReference type="EC" id="2.3.2.29"/>
    </reaction>
</comment>
<comment type="catalytic activity">
    <reaction evidence="1">
        <text>N-terminal L-aspartyl-[protein] + L-leucyl-tRNA(Leu) = N-terminal L-leucyl-L-aspartyl-[protein] + tRNA(Leu) + H(+)</text>
        <dbReference type="Rhea" id="RHEA:50420"/>
        <dbReference type="Rhea" id="RHEA-COMP:9613"/>
        <dbReference type="Rhea" id="RHEA-COMP:9622"/>
        <dbReference type="Rhea" id="RHEA-COMP:12669"/>
        <dbReference type="Rhea" id="RHEA-COMP:12674"/>
        <dbReference type="ChEBI" id="CHEBI:15378"/>
        <dbReference type="ChEBI" id="CHEBI:64720"/>
        <dbReference type="ChEBI" id="CHEBI:78442"/>
        <dbReference type="ChEBI" id="CHEBI:78494"/>
        <dbReference type="ChEBI" id="CHEBI:133042"/>
        <dbReference type="EC" id="2.3.2.29"/>
    </reaction>
</comment>
<comment type="subcellular location">
    <subcellularLocation>
        <location evidence="1">Cytoplasm</location>
    </subcellularLocation>
</comment>
<comment type="similarity">
    <text evidence="1">Belongs to the R-transferase family. Bpt subfamily.</text>
</comment>
<dbReference type="EC" id="2.3.2.29" evidence="1"/>
<dbReference type="EMBL" id="BX572601">
    <property type="protein sequence ID" value="CAE28152.1"/>
    <property type="molecule type" value="Genomic_DNA"/>
</dbReference>
<dbReference type="RefSeq" id="WP_011158261.1">
    <property type="nucleotide sequence ID" value="NZ_CP116810.1"/>
</dbReference>
<dbReference type="SMR" id="Q6N6A7"/>
<dbReference type="STRING" id="258594.RPA2710"/>
<dbReference type="GeneID" id="66893786"/>
<dbReference type="eggNOG" id="COG2935">
    <property type="taxonomic scope" value="Bacteria"/>
</dbReference>
<dbReference type="HOGENOM" id="CLU_077607_1_0_5"/>
<dbReference type="PhylomeDB" id="Q6N6A7"/>
<dbReference type="GO" id="GO:0005737">
    <property type="term" value="C:cytoplasm"/>
    <property type="evidence" value="ECO:0007669"/>
    <property type="project" value="UniProtKB-SubCell"/>
</dbReference>
<dbReference type="GO" id="GO:0004057">
    <property type="term" value="F:arginyl-tRNA--protein transferase activity"/>
    <property type="evidence" value="ECO:0007669"/>
    <property type="project" value="InterPro"/>
</dbReference>
<dbReference type="GO" id="GO:0008914">
    <property type="term" value="F:leucyl-tRNA--protein transferase activity"/>
    <property type="evidence" value="ECO:0007669"/>
    <property type="project" value="UniProtKB-UniRule"/>
</dbReference>
<dbReference type="GO" id="GO:0071596">
    <property type="term" value="P:ubiquitin-dependent protein catabolic process via the N-end rule pathway"/>
    <property type="evidence" value="ECO:0007669"/>
    <property type="project" value="InterPro"/>
</dbReference>
<dbReference type="HAMAP" id="MF_00689">
    <property type="entry name" value="Bpt"/>
    <property type="match status" value="1"/>
</dbReference>
<dbReference type="InterPro" id="IPR016181">
    <property type="entry name" value="Acyl_CoA_acyltransferase"/>
</dbReference>
<dbReference type="InterPro" id="IPR017138">
    <property type="entry name" value="Asp_Glu_LeuTrfase"/>
</dbReference>
<dbReference type="InterPro" id="IPR030700">
    <property type="entry name" value="N-end_Aminoacyl_Trfase"/>
</dbReference>
<dbReference type="InterPro" id="IPR007472">
    <property type="entry name" value="N-end_Aminoacyl_Trfase_C"/>
</dbReference>
<dbReference type="InterPro" id="IPR007471">
    <property type="entry name" value="N-end_Aminoacyl_Trfase_N"/>
</dbReference>
<dbReference type="NCBIfam" id="NF002342">
    <property type="entry name" value="PRK01305.1-3"/>
    <property type="match status" value="1"/>
</dbReference>
<dbReference type="NCBIfam" id="NF002343">
    <property type="entry name" value="PRK01305.1-4"/>
    <property type="match status" value="1"/>
</dbReference>
<dbReference type="NCBIfam" id="NF002346">
    <property type="entry name" value="PRK01305.2-3"/>
    <property type="match status" value="1"/>
</dbReference>
<dbReference type="PANTHER" id="PTHR21367">
    <property type="entry name" value="ARGININE-TRNA-PROTEIN TRANSFERASE 1"/>
    <property type="match status" value="1"/>
</dbReference>
<dbReference type="PANTHER" id="PTHR21367:SF1">
    <property type="entry name" value="ARGINYL-TRNA--PROTEIN TRANSFERASE 1"/>
    <property type="match status" value="1"/>
</dbReference>
<dbReference type="Pfam" id="PF04377">
    <property type="entry name" value="ATE_C"/>
    <property type="match status" value="1"/>
</dbReference>
<dbReference type="Pfam" id="PF04376">
    <property type="entry name" value="ATE_N"/>
    <property type="match status" value="1"/>
</dbReference>
<dbReference type="PIRSF" id="PIRSF037208">
    <property type="entry name" value="ATE_pro_prd"/>
    <property type="match status" value="1"/>
</dbReference>
<dbReference type="SUPFAM" id="SSF55729">
    <property type="entry name" value="Acyl-CoA N-acyltransferases (Nat)"/>
    <property type="match status" value="1"/>
</dbReference>
<feature type="chain" id="PRO_0000195114" description="Aspartate/glutamate leucyltransferase">
    <location>
        <begin position="1"/>
        <end position="258"/>
    </location>
</feature>
<protein>
    <recommendedName>
        <fullName evidence="1">Aspartate/glutamate leucyltransferase</fullName>
        <ecNumber evidence="1">2.3.2.29</ecNumber>
    </recommendedName>
</protein>
<reference key="1">
    <citation type="journal article" date="2004" name="Nat. Biotechnol.">
        <title>Complete genome sequence of the metabolically versatile photosynthetic bacterium Rhodopseudomonas palustris.</title>
        <authorList>
            <person name="Larimer F.W."/>
            <person name="Chain P."/>
            <person name="Hauser L."/>
            <person name="Lamerdin J.E."/>
            <person name="Malfatti S."/>
            <person name="Do L."/>
            <person name="Land M.L."/>
            <person name="Pelletier D.A."/>
            <person name="Beatty J.T."/>
            <person name="Lang A.S."/>
            <person name="Tabita F.R."/>
            <person name="Gibson J.L."/>
            <person name="Hanson T.E."/>
            <person name="Bobst C."/>
            <person name="Torres y Torres J.L."/>
            <person name="Peres C."/>
            <person name="Harrison F.H."/>
            <person name="Gibson J."/>
            <person name="Harwood C.S."/>
        </authorList>
    </citation>
    <scope>NUCLEOTIDE SEQUENCE [LARGE SCALE GENOMIC DNA]</scope>
    <source>
        <strain>ATCC BAA-98 / CGA009</strain>
    </source>
</reference>
<proteinExistence type="inferred from homology"/>
<keyword id="KW-0012">Acyltransferase</keyword>
<keyword id="KW-0963">Cytoplasm</keyword>
<keyword id="KW-0808">Transferase</keyword>
<accession>Q6N6A7</accession>